<evidence type="ECO:0000250" key="1">
    <source>
        <dbReference type="UniProtKB" id="O75396"/>
    </source>
</evidence>
<evidence type="ECO:0000250" key="2">
    <source>
        <dbReference type="UniProtKB" id="Q4KM74"/>
    </source>
</evidence>
<evidence type="ECO:0000255" key="3"/>
<evidence type="ECO:0000255" key="4">
    <source>
        <dbReference type="PROSITE-ProRule" id="PRU00231"/>
    </source>
</evidence>
<evidence type="ECO:0000255" key="5">
    <source>
        <dbReference type="PROSITE-ProRule" id="PRU00290"/>
    </source>
</evidence>
<evidence type="ECO:0000305" key="6"/>
<evidence type="ECO:0007744" key="7">
    <source>
    </source>
</evidence>
<evidence type="ECO:0007744" key="8">
    <source>
    </source>
</evidence>
<evidence type="ECO:0007744" key="9">
    <source>
    </source>
</evidence>
<evidence type="ECO:0007829" key="10">
    <source>
        <dbReference type="PDB" id="5VNH"/>
    </source>
</evidence>
<evidence type="ECO:0007829" key="11">
    <source>
        <dbReference type="PDB" id="5VNL"/>
    </source>
</evidence>
<sequence>MVLLTMIARVADGLPLAASMQEDEQSGRDLQQYQSQAKQLFRKLNEQSPTRCTLEAGAMTFHYIIEQGVCYLVLCEAAFPKKLAFAYLEDLHSEFDEQHGKKVPTVSRPYSFIEFDTFIQKTKKLYIDSRARRNLGSINTELQDVQRIMVANIEEVLQRGEALSALDSKANNLSSLSKKYRQDAKYLNMRSTYAKLAAVAVFFIMLIVYVRFWWL</sequence>
<keyword id="KW-0002">3D-structure</keyword>
<keyword id="KW-0007">Acetylation</keyword>
<keyword id="KW-0175">Coiled coil</keyword>
<keyword id="KW-0903">Direct protein sequencing</keyword>
<keyword id="KW-0256">Endoplasmic reticulum</keyword>
<keyword id="KW-0931">ER-Golgi transport</keyword>
<keyword id="KW-0333">Golgi apparatus</keyword>
<keyword id="KW-0472">Membrane</keyword>
<keyword id="KW-0597">Phosphoprotein</keyword>
<keyword id="KW-0653">Protein transport</keyword>
<keyword id="KW-1185">Reference proteome</keyword>
<keyword id="KW-0812">Transmembrane</keyword>
<keyword id="KW-1133">Transmembrane helix</keyword>
<keyword id="KW-0813">Transport</keyword>
<reference key="1">
    <citation type="journal article" date="1997" name="Cell">
        <title>Protein interactions regulating vesicle transport between the endoplasmic reticulum and Golgi apparatus in mammalian cells.</title>
        <authorList>
            <person name="Hay J.C."/>
            <person name="Chao D.S."/>
            <person name="Kuo C.S."/>
            <person name="Scheller R.H."/>
        </authorList>
    </citation>
    <scope>NUCLEOTIDE SEQUENCE [MRNA]</scope>
    <source>
        <strain>C57BL/6J</strain>
        <tissue>Placenta</tissue>
    </source>
</reference>
<reference key="2">
    <citation type="journal article" date="2005" name="Science">
        <title>The transcriptional landscape of the mammalian genome.</title>
        <authorList>
            <person name="Carninci P."/>
            <person name="Kasukawa T."/>
            <person name="Katayama S."/>
            <person name="Gough J."/>
            <person name="Frith M.C."/>
            <person name="Maeda N."/>
            <person name="Oyama R."/>
            <person name="Ravasi T."/>
            <person name="Lenhard B."/>
            <person name="Wells C."/>
            <person name="Kodzius R."/>
            <person name="Shimokawa K."/>
            <person name="Bajic V.B."/>
            <person name="Brenner S.E."/>
            <person name="Batalov S."/>
            <person name="Forrest A.R."/>
            <person name="Zavolan M."/>
            <person name="Davis M.J."/>
            <person name="Wilming L.G."/>
            <person name="Aidinis V."/>
            <person name="Allen J.E."/>
            <person name="Ambesi-Impiombato A."/>
            <person name="Apweiler R."/>
            <person name="Aturaliya R.N."/>
            <person name="Bailey T.L."/>
            <person name="Bansal M."/>
            <person name="Baxter L."/>
            <person name="Beisel K.W."/>
            <person name="Bersano T."/>
            <person name="Bono H."/>
            <person name="Chalk A.M."/>
            <person name="Chiu K.P."/>
            <person name="Choudhary V."/>
            <person name="Christoffels A."/>
            <person name="Clutterbuck D.R."/>
            <person name="Crowe M.L."/>
            <person name="Dalla E."/>
            <person name="Dalrymple B.P."/>
            <person name="de Bono B."/>
            <person name="Della Gatta G."/>
            <person name="di Bernardo D."/>
            <person name="Down T."/>
            <person name="Engstrom P."/>
            <person name="Fagiolini M."/>
            <person name="Faulkner G."/>
            <person name="Fletcher C.F."/>
            <person name="Fukushima T."/>
            <person name="Furuno M."/>
            <person name="Futaki S."/>
            <person name="Gariboldi M."/>
            <person name="Georgii-Hemming P."/>
            <person name="Gingeras T.R."/>
            <person name="Gojobori T."/>
            <person name="Green R.E."/>
            <person name="Gustincich S."/>
            <person name="Harbers M."/>
            <person name="Hayashi Y."/>
            <person name="Hensch T.K."/>
            <person name="Hirokawa N."/>
            <person name="Hill D."/>
            <person name="Huminiecki L."/>
            <person name="Iacono M."/>
            <person name="Ikeo K."/>
            <person name="Iwama A."/>
            <person name="Ishikawa T."/>
            <person name="Jakt M."/>
            <person name="Kanapin A."/>
            <person name="Katoh M."/>
            <person name="Kawasawa Y."/>
            <person name="Kelso J."/>
            <person name="Kitamura H."/>
            <person name="Kitano H."/>
            <person name="Kollias G."/>
            <person name="Krishnan S.P."/>
            <person name="Kruger A."/>
            <person name="Kummerfeld S.K."/>
            <person name="Kurochkin I.V."/>
            <person name="Lareau L.F."/>
            <person name="Lazarevic D."/>
            <person name="Lipovich L."/>
            <person name="Liu J."/>
            <person name="Liuni S."/>
            <person name="McWilliam S."/>
            <person name="Madan Babu M."/>
            <person name="Madera M."/>
            <person name="Marchionni L."/>
            <person name="Matsuda H."/>
            <person name="Matsuzawa S."/>
            <person name="Miki H."/>
            <person name="Mignone F."/>
            <person name="Miyake S."/>
            <person name="Morris K."/>
            <person name="Mottagui-Tabar S."/>
            <person name="Mulder N."/>
            <person name="Nakano N."/>
            <person name="Nakauchi H."/>
            <person name="Ng P."/>
            <person name="Nilsson R."/>
            <person name="Nishiguchi S."/>
            <person name="Nishikawa S."/>
            <person name="Nori F."/>
            <person name="Ohara O."/>
            <person name="Okazaki Y."/>
            <person name="Orlando V."/>
            <person name="Pang K.C."/>
            <person name="Pavan W.J."/>
            <person name="Pavesi G."/>
            <person name="Pesole G."/>
            <person name="Petrovsky N."/>
            <person name="Piazza S."/>
            <person name="Reed J."/>
            <person name="Reid J.F."/>
            <person name="Ring B.Z."/>
            <person name="Ringwald M."/>
            <person name="Rost B."/>
            <person name="Ruan Y."/>
            <person name="Salzberg S.L."/>
            <person name="Sandelin A."/>
            <person name="Schneider C."/>
            <person name="Schoenbach C."/>
            <person name="Sekiguchi K."/>
            <person name="Semple C.A."/>
            <person name="Seno S."/>
            <person name="Sessa L."/>
            <person name="Sheng Y."/>
            <person name="Shibata Y."/>
            <person name="Shimada H."/>
            <person name="Shimada K."/>
            <person name="Silva D."/>
            <person name="Sinclair B."/>
            <person name="Sperling S."/>
            <person name="Stupka E."/>
            <person name="Sugiura K."/>
            <person name="Sultana R."/>
            <person name="Takenaka Y."/>
            <person name="Taki K."/>
            <person name="Tammoja K."/>
            <person name="Tan S.L."/>
            <person name="Tang S."/>
            <person name="Taylor M.S."/>
            <person name="Tegner J."/>
            <person name="Teichmann S.A."/>
            <person name="Ueda H.R."/>
            <person name="van Nimwegen E."/>
            <person name="Verardo R."/>
            <person name="Wei C.L."/>
            <person name="Yagi K."/>
            <person name="Yamanishi H."/>
            <person name="Zabarovsky E."/>
            <person name="Zhu S."/>
            <person name="Zimmer A."/>
            <person name="Hide W."/>
            <person name="Bult C."/>
            <person name="Grimmond S.M."/>
            <person name="Teasdale R.D."/>
            <person name="Liu E.T."/>
            <person name="Brusic V."/>
            <person name="Quackenbush J."/>
            <person name="Wahlestedt C."/>
            <person name="Mattick J.S."/>
            <person name="Hume D.A."/>
            <person name="Kai C."/>
            <person name="Sasaki D."/>
            <person name="Tomaru Y."/>
            <person name="Fukuda S."/>
            <person name="Kanamori-Katayama M."/>
            <person name="Suzuki M."/>
            <person name="Aoki J."/>
            <person name="Arakawa T."/>
            <person name="Iida J."/>
            <person name="Imamura K."/>
            <person name="Itoh M."/>
            <person name="Kato T."/>
            <person name="Kawaji H."/>
            <person name="Kawagashira N."/>
            <person name="Kawashima T."/>
            <person name="Kojima M."/>
            <person name="Kondo S."/>
            <person name="Konno H."/>
            <person name="Nakano K."/>
            <person name="Ninomiya N."/>
            <person name="Nishio T."/>
            <person name="Okada M."/>
            <person name="Plessy C."/>
            <person name="Shibata K."/>
            <person name="Shiraki T."/>
            <person name="Suzuki S."/>
            <person name="Tagami M."/>
            <person name="Waki K."/>
            <person name="Watahiki A."/>
            <person name="Okamura-Oho Y."/>
            <person name="Suzuki H."/>
            <person name="Kawai J."/>
            <person name="Hayashizaki Y."/>
        </authorList>
    </citation>
    <scope>NUCLEOTIDE SEQUENCE [LARGE SCALE MRNA]</scope>
    <source>
        <strain>C57BL/6J</strain>
        <strain>NOD</strain>
        <tissue>Embryo</tissue>
        <tissue>Pituitary</tissue>
        <tissue>Thymus</tissue>
    </source>
</reference>
<reference key="3">
    <citation type="journal article" date="2004" name="Genome Res.">
        <title>The status, quality, and expansion of the NIH full-length cDNA project: the Mammalian Gene Collection (MGC).</title>
        <authorList>
            <consortium name="The MGC Project Team"/>
        </authorList>
    </citation>
    <scope>NUCLEOTIDE SEQUENCE [LARGE SCALE MRNA]</scope>
    <source>
        <tissue>Mammary gland</tissue>
    </source>
</reference>
<reference key="4">
    <citation type="submission" date="2007-04" db="UniProtKB">
        <authorList>
            <person name="Lubec G."/>
            <person name="Kang S.U."/>
        </authorList>
    </citation>
    <scope>PROTEIN SEQUENCE OF 29-38</scope>
    <scope>IDENTIFICATION BY MASS SPECTROMETRY</scope>
    <source>
        <strain>C57BL/6J</strain>
        <tissue>Brain</tissue>
    </source>
</reference>
<reference key="5">
    <citation type="journal article" date="2007" name="Proc. Natl. Acad. Sci. U.S.A.">
        <title>Large-scale phosphorylation analysis of mouse liver.</title>
        <authorList>
            <person name="Villen J."/>
            <person name="Beausoleil S.A."/>
            <person name="Gerber S.A."/>
            <person name="Gygi S.P."/>
        </authorList>
    </citation>
    <scope>IDENTIFICATION BY MASS SPECTROMETRY [LARGE SCALE ANALYSIS]</scope>
    <source>
        <tissue>Liver</tissue>
    </source>
</reference>
<reference key="6">
    <citation type="journal article" date="2008" name="J. Proteome Res.">
        <title>Specific phosphopeptide enrichment with immobilized titanium ion affinity chromatography adsorbent for phosphoproteome analysis.</title>
        <authorList>
            <person name="Zhou H."/>
            <person name="Ye M."/>
            <person name="Dong J."/>
            <person name="Han G."/>
            <person name="Jiang X."/>
            <person name="Wu R."/>
            <person name="Zou H."/>
        </authorList>
    </citation>
    <scope>PHOSPHORYLATION [LARGE SCALE ANALYSIS] AT SER-137</scope>
    <scope>IDENTIFICATION BY MASS SPECTROMETRY [LARGE SCALE ANALYSIS]</scope>
    <source>
        <tissue>Liver</tissue>
    </source>
</reference>
<reference key="7">
    <citation type="journal article" date="2009" name="Immunity">
        <title>The phagosomal proteome in interferon-gamma-activated macrophages.</title>
        <authorList>
            <person name="Trost M."/>
            <person name="English L."/>
            <person name="Lemieux S."/>
            <person name="Courcelles M."/>
            <person name="Desjardins M."/>
            <person name="Thibault P."/>
        </authorList>
    </citation>
    <scope>PHOSPHORYLATION [LARGE SCALE ANALYSIS] AT SER-137</scope>
    <scope>IDENTIFICATION BY MASS SPECTROMETRY [LARGE SCALE ANALYSIS]</scope>
</reference>
<reference key="8">
    <citation type="journal article" date="2010" name="Cell">
        <title>A tissue-specific atlas of mouse protein phosphorylation and expression.</title>
        <authorList>
            <person name="Huttlin E.L."/>
            <person name="Jedrychowski M.P."/>
            <person name="Elias J.E."/>
            <person name="Goswami T."/>
            <person name="Rad R."/>
            <person name="Beausoleil S.A."/>
            <person name="Villen J."/>
            <person name="Haas W."/>
            <person name="Sowa M.E."/>
            <person name="Gygi S.P."/>
        </authorList>
    </citation>
    <scope>PHOSPHORYLATION [LARGE SCALE ANALYSIS] AT SER-137 AND SER-168</scope>
    <scope>IDENTIFICATION BY MASS SPECTROMETRY [LARGE SCALE ANALYSIS]</scope>
    <source>
        <tissue>Brain</tissue>
        <tissue>Brown adipose tissue</tissue>
        <tissue>Heart</tissue>
        <tissue>Kidney</tissue>
        <tissue>Liver</tissue>
        <tissue>Lung</tissue>
        <tissue>Pancreas</tissue>
        <tissue>Spleen</tissue>
        <tissue>Testis</tissue>
    </source>
</reference>
<reference key="9">
    <citation type="journal article" date="2001" name="J. Biol. Chem.">
        <title>A novel SNARE N-terminal domain revealed by the crystal structure of Sec22b.</title>
        <authorList>
            <person name="Gonzalez L.C. Jr."/>
            <person name="Weis W.I."/>
            <person name="Scheller R.H."/>
        </authorList>
    </citation>
    <scope>X-RAY CRYSTALLOGRAPHY (2.4 ANGSTROMS) OF 1-130</scope>
</reference>
<comment type="function">
    <text>SNARE involved in targeting and fusion of ER-derived transport vesicles with the Golgi complex as well as Golgi-derived retrograde transport vesicles with the ER.</text>
</comment>
<comment type="subunit">
    <text evidence="1 2">Interacts with STX17. Component of two distinct SNARE complexes consisting of STX5, GOSR2/BOS1, BET1 and SEC22B or STX18, USE1L, BNIP1/SEC20L and SEC22B. YKT6 can probably replace SEC22B as subunit of either complex (By similarity). Interacts with the COPII Sec23/24 complex composed of SEC23A and SEC24A; recruits SEC22B into COPII-coated vesicles to allow its transport from the endoplasmic reticulum to the Golgi (By similarity). Interacts with BET1 (By similarity).</text>
</comment>
<comment type="interaction">
    <interactant intactId="EBI-8400083">
        <id>O08547</id>
    </interactant>
    <interactant intactId="EBI-400878">
        <id>O35526</id>
        <label>Stx1a</label>
    </interactant>
    <organismsDiffer>false</organismsDiffer>
    <experiments>4</experiments>
</comment>
<comment type="subcellular location">
    <subcellularLocation>
        <location evidence="2">Endoplasmic reticulum membrane</location>
        <topology evidence="2">Single-pass type IV membrane protein</topology>
    </subcellularLocation>
    <subcellularLocation>
        <location evidence="2">Endoplasmic reticulum-Golgi intermediate compartment membrane</location>
    </subcellularLocation>
    <subcellularLocation>
        <location evidence="2">Golgi apparatus</location>
        <location evidence="2">cis-Golgi network membrane</location>
    </subcellularLocation>
    <subcellularLocation>
        <location evidence="2">Golgi apparatus</location>
        <location evidence="2">trans-Golgi network membrane</location>
    </subcellularLocation>
    <subcellularLocation>
        <location evidence="1">Melanosome</location>
    </subcellularLocation>
    <text evidence="2">Concentrated most in the intermediate compartment/cis-Golgi network and the cis-Golgi cisternae 1 and 2. Greatly reduced in concentration at the trans end of the Golgi apparatus.</text>
</comment>
<comment type="similarity">
    <text evidence="6">Belongs to the synaptobrevin family.</text>
</comment>
<accession>O08547</accession>
<accession>Q91VU3</accession>
<protein>
    <recommendedName>
        <fullName>Vesicle-trafficking protein SEC22b</fullName>
    </recommendedName>
    <alternativeName>
        <fullName>ER-Golgi SNARE of 24 kDa</fullName>
        <shortName>ERS-24</shortName>
        <shortName>ERS24</shortName>
    </alternativeName>
    <alternativeName>
        <fullName>SEC22 vesicle-trafficking protein homolog B</fullName>
    </alternativeName>
    <alternativeName>
        <fullName>SEC22 vesicle-trafficking protein-like 1</fullName>
        <shortName>mSec22b</shortName>
    </alternativeName>
</protein>
<name>SC22B_MOUSE</name>
<organism>
    <name type="scientific">Mus musculus</name>
    <name type="common">Mouse</name>
    <dbReference type="NCBI Taxonomy" id="10090"/>
    <lineage>
        <taxon>Eukaryota</taxon>
        <taxon>Metazoa</taxon>
        <taxon>Chordata</taxon>
        <taxon>Craniata</taxon>
        <taxon>Vertebrata</taxon>
        <taxon>Euteleostomi</taxon>
        <taxon>Mammalia</taxon>
        <taxon>Eutheria</taxon>
        <taxon>Euarchontoglires</taxon>
        <taxon>Glires</taxon>
        <taxon>Rodentia</taxon>
        <taxon>Myomorpha</taxon>
        <taxon>Muroidea</taxon>
        <taxon>Muridae</taxon>
        <taxon>Murinae</taxon>
        <taxon>Mus</taxon>
        <taxon>Mus</taxon>
    </lineage>
</organism>
<feature type="chain" id="PRO_0000206771" description="Vesicle-trafficking protein SEC22b">
    <location>
        <begin position="1"/>
        <end position="215"/>
    </location>
</feature>
<feature type="topological domain" description="Cytoplasmic" evidence="3">
    <location>
        <begin position="1"/>
        <end position="194"/>
    </location>
</feature>
<feature type="transmembrane region" description="Helical; Anchor for type IV membrane protein" evidence="3">
    <location>
        <begin position="195"/>
        <end position="215"/>
    </location>
</feature>
<feature type="domain" description="Longin" evidence="4">
    <location>
        <begin position="6"/>
        <end position="119"/>
    </location>
</feature>
<feature type="domain" description="v-SNARE coiled-coil homology" evidence="5">
    <location>
        <begin position="134"/>
        <end position="194"/>
    </location>
</feature>
<feature type="modified residue" description="N6-acetyllysine" evidence="1">
    <location>
        <position position="38"/>
    </location>
</feature>
<feature type="modified residue" description="Phosphoserine" evidence="7 8 9">
    <location>
        <position position="137"/>
    </location>
</feature>
<feature type="modified residue" description="Phosphothreonine" evidence="1">
    <location>
        <position position="140"/>
    </location>
</feature>
<feature type="modified residue" description="Phosphoserine" evidence="1">
    <location>
        <position position="164"/>
    </location>
</feature>
<feature type="modified residue" description="Phosphoserine" evidence="9">
    <location>
        <position position="168"/>
    </location>
</feature>
<feature type="modified residue" description="Phosphoserine" evidence="1">
    <location>
        <position position="174"/>
    </location>
</feature>
<feature type="modified residue" description="Phosphoserine" evidence="1">
    <location>
        <position position="177"/>
    </location>
</feature>
<feature type="sequence conflict" description="In Ref. 3; AAH09024." evidence="6" ref="3">
    <original>M</original>
    <variation>I</variation>
    <location>
        <position position="189"/>
    </location>
</feature>
<feature type="strand" evidence="11">
    <location>
        <begin position="4"/>
        <end position="9"/>
    </location>
</feature>
<feature type="turn" evidence="11">
    <location>
        <begin position="10"/>
        <end position="13"/>
    </location>
</feature>
<feature type="strand" evidence="11">
    <location>
        <begin position="14"/>
        <end position="19"/>
    </location>
</feature>
<feature type="helix" evidence="11">
    <location>
        <begin position="30"/>
        <end position="43"/>
    </location>
</feature>
<feature type="strand" evidence="10">
    <location>
        <begin position="46"/>
        <end position="48"/>
    </location>
</feature>
<feature type="strand" evidence="11">
    <location>
        <begin position="50"/>
        <end position="56"/>
    </location>
</feature>
<feature type="strand" evidence="11">
    <location>
        <begin position="59"/>
        <end position="66"/>
    </location>
</feature>
<feature type="strand" evidence="11">
    <location>
        <begin position="69"/>
        <end position="76"/>
    </location>
</feature>
<feature type="helix" evidence="11">
    <location>
        <begin position="81"/>
        <end position="99"/>
    </location>
</feature>
<feature type="turn" evidence="11">
    <location>
        <begin position="100"/>
        <end position="102"/>
    </location>
</feature>
<feature type="helix" evidence="11">
    <location>
        <begin position="103"/>
        <end position="105"/>
    </location>
</feature>
<feature type="turn" evidence="11">
    <location>
        <begin position="109"/>
        <end position="112"/>
    </location>
</feature>
<feature type="helix" evidence="11">
    <location>
        <begin position="113"/>
        <end position="115"/>
    </location>
</feature>
<feature type="helix" evidence="11">
    <location>
        <begin position="116"/>
        <end position="123"/>
    </location>
</feature>
<feature type="turn" evidence="11">
    <location>
        <begin position="124"/>
        <end position="126"/>
    </location>
</feature>
<feature type="turn" evidence="11">
    <location>
        <begin position="129"/>
        <end position="131"/>
    </location>
</feature>
<feature type="strand" evidence="11">
    <location>
        <begin position="150"/>
        <end position="152"/>
    </location>
</feature>
<feature type="helix" evidence="11">
    <location>
        <begin position="153"/>
        <end position="156"/>
    </location>
</feature>
<gene>
    <name type="primary">Sec22b</name>
    <name type="synonym">Sec22l1</name>
</gene>
<proteinExistence type="evidence at protein level"/>
<dbReference type="EMBL" id="U91538">
    <property type="protein sequence ID" value="AAC53130.1"/>
    <property type="molecule type" value="mRNA"/>
</dbReference>
<dbReference type="EMBL" id="AK017237">
    <property type="protein sequence ID" value="BAB30646.1"/>
    <property type="molecule type" value="mRNA"/>
</dbReference>
<dbReference type="EMBL" id="AK034973">
    <property type="protein sequence ID" value="BAC28899.1"/>
    <property type="molecule type" value="mRNA"/>
</dbReference>
<dbReference type="EMBL" id="AK037918">
    <property type="protein sequence ID" value="BAC29901.1"/>
    <property type="molecule type" value="mRNA"/>
</dbReference>
<dbReference type="EMBL" id="AK088514">
    <property type="protein sequence ID" value="BAC40397.1"/>
    <property type="molecule type" value="mRNA"/>
</dbReference>
<dbReference type="EMBL" id="AK089928">
    <property type="protein sequence ID" value="BAC40999.1"/>
    <property type="molecule type" value="mRNA"/>
</dbReference>
<dbReference type="EMBL" id="BC009024">
    <property type="protein sequence ID" value="AAH09024.1"/>
    <property type="molecule type" value="mRNA"/>
</dbReference>
<dbReference type="CCDS" id="CCDS17658.1"/>
<dbReference type="RefSeq" id="NP_035472.1">
    <property type="nucleotide sequence ID" value="NM_011342.4"/>
</dbReference>
<dbReference type="PDB" id="1IFQ">
    <property type="method" value="X-ray"/>
    <property type="resolution" value="2.40 A"/>
    <property type="chains" value="A/B=2-127"/>
</dbReference>
<dbReference type="PDB" id="5VNE">
    <property type="method" value="X-ray"/>
    <property type="resolution" value="2.70 A"/>
    <property type="chains" value="C=1-157"/>
</dbReference>
<dbReference type="PDB" id="5VNF">
    <property type="method" value="X-ray"/>
    <property type="resolution" value="2.41 A"/>
    <property type="chains" value="C=1-157"/>
</dbReference>
<dbReference type="PDB" id="5VNG">
    <property type="method" value="X-ray"/>
    <property type="resolution" value="2.60 A"/>
    <property type="chains" value="C=1-157"/>
</dbReference>
<dbReference type="PDB" id="5VNH">
    <property type="method" value="X-ray"/>
    <property type="resolution" value="2.60 A"/>
    <property type="chains" value="C=1-157"/>
</dbReference>
<dbReference type="PDB" id="5VNI">
    <property type="method" value="X-ray"/>
    <property type="resolution" value="2.79 A"/>
    <property type="chains" value="C=1-157"/>
</dbReference>
<dbReference type="PDB" id="5VNJ">
    <property type="method" value="X-ray"/>
    <property type="resolution" value="2.81 A"/>
    <property type="chains" value="C=1-157"/>
</dbReference>
<dbReference type="PDB" id="5VNK">
    <property type="method" value="X-ray"/>
    <property type="resolution" value="2.55 A"/>
    <property type="chains" value="C=1-157"/>
</dbReference>
<dbReference type="PDB" id="5VNL">
    <property type="method" value="X-ray"/>
    <property type="resolution" value="2.39 A"/>
    <property type="chains" value="C=1-157"/>
</dbReference>
<dbReference type="PDB" id="5VNM">
    <property type="method" value="X-ray"/>
    <property type="resolution" value="2.77 A"/>
    <property type="chains" value="C=1-157"/>
</dbReference>
<dbReference type="PDB" id="5VNN">
    <property type="method" value="X-ray"/>
    <property type="resolution" value="2.50 A"/>
    <property type="chains" value="C=1-157"/>
</dbReference>
<dbReference type="PDB" id="5VNO">
    <property type="method" value="X-ray"/>
    <property type="resolution" value="2.90 A"/>
    <property type="chains" value="C=1-157"/>
</dbReference>
<dbReference type="PDBsum" id="1IFQ"/>
<dbReference type="PDBsum" id="5VNE"/>
<dbReference type="PDBsum" id="5VNF"/>
<dbReference type="PDBsum" id="5VNG"/>
<dbReference type="PDBsum" id="5VNH"/>
<dbReference type="PDBsum" id="5VNI"/>
<dbReference type="PDBsum" id="5VNJ"/>
<dbReference type="PDBsum" id="5VNK"/>
<dbReference type="PDBsum" id="5VNL"/>
<dbReference type="PDBsum" id="5VNM"/>
<dbReference type="PDBsum" id="5VNN"/>
<dbReference type="PDBsum" id="5VNO"/>
<dbReference type="SMR" id="O08547"/>
<dbReference type="BioGRID" id="203149">
    <property type="interactions" value="32"/>
</dbReference>
<dbReference type="DIP" id="DIP-60852N"/>
<dbReference type="FunCoup" id="O08547">
    <property type="interactions" value="3709"/>
</dbReference>
<dbReference type="IntAct" id="O08547">
    <property type="interactions" value="3"/>
</dbReference>
<dbReference type="MINT" id="O08547"/>
<dbReference type="STRING" id="10090.ENSMUSP00000029476"/>
<dbReference type="GlyGen" id="O08547">
    <property type="glycosylation" value="2 sites, 1 N-linked glycan (1 site), 1 O-linked glycan (1 site)"/>
</dbReference>
<dbReference type="iPTMnet" id="O08547"/>
<dbReference type="PhosphoSitePlus" id="O08547"/>
<dbReference type="SwissPalm" id="O08547"/>
<dbReference type="jPOST" id="O08547"/>
<dbReference type="PaxDb" id="10090-ENSMUSP00000029476"/>
<dbReference type="PeptideAtlas" id="O08547"/>
<dbReference type="ProteomicsDB" id="253402"/>
<dbReference type="Pumba" id="O08547"/>
<dbReference type="TopDownProteomics" id="O08547"/>
<dbReference type="Antibodypedia" id="72298">
    <property type="antibodies" value="211 antibodies from 25 providers"/>
</dbReference>
<dbReference type="DNASU" id="20333"/>
<dbReference type="Ensembl" id="ENSMUST00000029476.9">
    <property type="protein sequence ID" value="ENSMUSP00000029476.3"/>
    <property type="gene ID" value="ENSMUSG00000027879.10"/>
</dbReference>
<dbReference type="GeneID" id="20333"/>
<dbReference type="KEGG" id="mmu:20333"/>
<dbReference type="UCSC" id="uc008qpk.1">
    <property type="organism name" value="mouse"/>
</dbReference>
<dbReference type="AGR" id="MGI:1338759"/>
<dbReference type="CTD" id="9554"/>
<dbReference type="MGI" id="MGI:1338759">
    <property type="gene designation" value="Sec22b"/>
</dbReference>
<dbReference type="VEuPathDB" id="HostDB:ENSMUSG00000027879"/>
<dbReference type="eggNOG" id="KOG0862">
    <property type="taxonomic scope" value="Eukaryota"/>
</dbReference>
<dbReference type="GeneTree" id="ENSGT00940000156349"/>
<dbReference type="HOGENOM" id="CLU_054453_4_1_1"/>
<dbReference type="InParanoid" id="O08547"/>
<dbReference type="OMA" id="FIYWRFF"/>
<dbReference type="OrthoDB" id="1719357at2759"/>
<dbReference type="PhylomeDB" id="O08547"/>
<dbReference type="TreeFam" id="TF105933"/>
<dbReference type="Reactome" id="R-MMU-1236974">
    <property type="pathway name" value="ER-Phagosome pathway"/>
</dbReference>
<dbReference type="Reactome" id="R-MMU-204005">
    <property type="pathway name" value="COPII-mediated vesicle transport"/>
</dbReference>
<dbReference type="Reactome" id="R-MMU-5694530">
    <property type="pathway name" value="Cargo concentration in the ER"/>
</dbReference>
<dbReference type="Reactome" id="R-MMU-6811434">
    <property type="pathway name" value="COPI-dependent Golgi-to-ER retrograde traffic"/>
</dbReference>
<dbReference type="BioGRID-ORCS" id="20333">
    <property type="hits" value="28 hits in 79 CRISPR screens"/>
</dbReference>
<dbReference type="CD-CODE" id="CE726F99">
    <property type="entry name" value="Postsynaptic density"/>
</dbReference>
<dbReference type="ChiTaRS" id="Sec22b">
    <property type="organism name" value="mouse"/>
</dbReference>
<dbReference type="EvolutionaryTrace" id="O08547"/>
<dbReference type="PRO" id="PR:O08547"/>
<dbReference type="Proteomes" id="UP000000589">
    <property type="component" value="Chromosome 3"/>
</dbReference>
<dbReference type="RNAct" id="O08547">
    <property type="molecule type" value="protein"/>
</dbReference>
<dbReference type="Bgee" id="ENSMUSG00000027879">
    <property type="expression patterns" value="Expressed in humerus cartilage element and 270 other cell types or tissues"/>
</dbReference>
<dbReference type="ExpressionAtlas" id="O08547">
    <property type="expression patterns" value="baseline and differential"/>
</dbReference>
<dbReference type="GO" id="GO:0030137">
    <property type="term" value="C:COPI-coated vesicle"/>
    <property type="evidence" value="ECO:0007669"/>
    <property type="project" value="Ensembl"/>
</dbReference>
<dbReference type="GO" id="GO:0005789">
    <property type="term" value="C:endoplasmic reticulum membrane"/>
    <property type="evidence" value="ECO:0000314"/>
    <property type="project" value="MGI"/>
</dbReference>
<dbReference type="GO" id="GO:0033116">
    <property type="term" value="C:endoplasmic reticulum-Golgi intermediate compartment membrane"/>
    <property type="evidence" value="ECO:0007669"/>
    <property type="project" value="UniProtKB-SubCell"/>
</dbReference>
<dbReference type="GO" id="GO:0012507">
    <property type="term" value="C:ER to Golgi transport vesicle membrane"/>
    <property type="evidence" value="ECO:0007669"/>
    <property type="project" value="Ensembl"/>
</dbReference>
<dbReference type="GO" id="GO:0000139">
    <property type="term" value="C:Golgi membrane"/>
    <property type="evidence" value="ECO:0000314"/>
    <property type="project" value="MGI"/>
</dbReference>
<dbReference type="GO" id="GO:0042470">
    <property type="term" value="C:melanosome"/>
    <property type="evidence" value="ECO:0007669"/>
    <property type="project" value="UniProtKB-SubCell"/>
</dbReference>
<dbReference type="GO" id="GO:0031201">
    <property type="term" value="C:SNARE complex"/>
    <property type="evidence" value="ECO:0007669"/>
    <property type="project" value="Ensembl"/>
</dbReference>
<dbReference type="GO" id="GO:0008021">
    <property type="term" value="C:synaptic vesicle"/>
    <property type="evidence" value="ECO:0007669"/>
    <property type="project" value="Ensembl"/>
</dbReference>
<dbReference type="GO" id="GO:0005484">
    <property type="term" value="F:SNAP receptor activity"/>
    <property type="evidence" value="ECO:0007669"/>
    <property type="project" value="InterPro"/>
</dbReference>
<dbReference type="GO" id="GO:0019905">
    <property type="term" value="F:syntaxin binding"/>
    <property type="evidence" value="ECO:0007669"/>
    <property type="project" value="Ensembl"/>
</dbReference>
<dbReference type="GO" id="GO:0006888">
    <property type="term" value="P:endoplasmic reticulum to Golgi vesicle-mediated transport"/>
    <property type="evidence" value="ECO:0000304"/>
    <property type="project" value="MGI"/>
</dbReference>
<dbReference type="GO" id="GO:1902902">
    <property type="term" value="P:negative regulation of autophagosome assembly"/>
    <property type="evidence" value="ECO:0007669"/>
    <property type="project" value="Ensembl"/>
</dbReference>
<dbReference type="GO" id="GO:0045732">
    <property type="term" value="P:positive regulation of protein catabolic process"/>
    <property type="evidence" value="ECO:0007669"/>
    <property type="project" value="Ensembl"/>
</dbReference>
<dbReference type="GO" id="GO:0015031">
    <property type="term" value="P:protein transport"/>
    <property type="evidence" value="ECO:0007669"/>
    <property type="project" value="UniProtKB-KW"/>
</dbReference>
<dbReference type="GO" id="GO:0006890">
    <property type="term" value="P:retrograde vesicle-mediated transport, Golgi to endoplasmic reticulum"/>
    <property type="evidence" value="ECO:0007669"/>
    <property type="project" value="InterPro"/>
</dbReference>
<dbReference type="GO" id="GO:0016192">
    <property type="term" value="P:vesicle-mediated transport"/>
    <property type="evidence" value="ECO:0000314"/>
    <property type="project" value="MGI"/>
</dbReference>
<dbReference type="CDD" id="cd14824">
    <property type="entry name" value="Longin"/>
    <property type="match status" value="1"/>
</dbReference>
<dbReference type="CDD" id="cd15866">
    <property type="entry name" value="R-SNARE_SEC22"/>
    <property type="match status" value="1"/>
</dbReference>
<dbReference type="FunFam" id="1.20.5.110:FF:000019">
    <property type="entry name" value="Vesicle-trafficking protein SEC22b"/>
    <property type="match status" value="1"/>
</dbReference>
<dbReference type="FunFam" id="3.30.450.50:FF:000004">
    <property type="entry name" value="vesicle-trafficking protein SEC22b"/>
    <property type="match status" value="1"/>
</dbReference>
<dbReference type="Gene3D" id="1.20.5.110">
    <property type="match status" value="1"/>
</dbReference>
<dbReference type="Gene3D" id="3.30.450.50">
    <property type="entry name" value="Longin domain"/>
    <property type="match status" value="1"/>
</dbReference>
<dbReference type="InterPro" id="IPR011012">
    <property type="entry name" value="Longin-like_dom_sf"/>
</dbReference>
<dbReference type="InterPro" id="IPR010908">
    <property type="entry name" value="Longin_dom"/>
</dbReference>
<dbReference type="InterPro" id="IPR044565">
    <property type="entry name" value="Sec22"/>
</dbReference>
<dbReference type="InterPro" id="IPR001388">
    <property type="entry name" value="Synaptobrevin-like"/>
</dbReference>
<dbReference type="InterPro" id="IPR042855">
    <property type="entry name" value="V_SNARE_CC"/>
</dbReference>
<dbReference type="PANTHER" id="PTHR45837">
    <property type="entry name" value="VESICLE-TRAFFICKING PROTEIN SEC22B"/>
    <property type="match status" value="1"/>
</dbReference>
<dbReference type="Pfam" id="PF13774">
    <property type="entry name" value="Longin"/>
    <property type="match status" value="1"/>
</dbReference>
<dbReference type="Pfam" id="PF00957">
    <property type="entry name" value="Synaptobrevin"/>
    <property type="match status" value="1"/>
</dbReference>
<dbReference type="PRINTS" id="PR00219">
    <property type="entry name" value="SYNAPTOBREVN"/>
</dbReference>
<dbReference type="SMART" id="SM01270">
    <property type="entry name" value="Longin"/>
    <property type="match status" value="1"/>
</dbReference>
<dbReference type="SUPFAM" id="SSF58038">
    <property type="entry name" value="SNARE fusion complex"/>
    <property type="match status" value="1"/>
</dbReference>
<dbReference type="SUPFAM" id="SSF64356">
    <property type="entry name" value="SNARE-like"/>
    <property type="match status" value="1"/>
</dbReference>
<dbReference type="PROSITE" id="PS50859">
    <property type="entry name" value="LONGIN"/>
    <property type="match status" value="1"/>
</dbReference>
<dbReference type="PROSITE" id="PS50892">
    <property type="entry name" value="V_SNARE"/>
    <property type="match status" value="1"/>
</dbReference>